<dbReference type="EMBL" id="HE601339">
    <property type="protein sequence ID" value="CAP24443.1"/>
    <property type="molecule type" value="Genomic_DNA"/>
</dbReference>
<dbReference type="SMR" id="A8WVD2"/>
<dbReference type="FunCoup" id="A8WVD2">
    <property type="interactions" value="3010"/>
</dbReference>
<dbReference type="STRING" id="6238.A8WVD2"/>
<dbReference type="EnsemblMetazoa" id="CBG03573.1">
    <property type="protein sequence ID" value="CBG03573.1"/>
    <property type="gene ID" value="WBGene00026412"/>
</dbReference>
<dbReference type="KEGG" id="cbr:CBG_03573"/>
<dbReference type="CTD" id="8589051"/>
<dbReference type="WormBase" id="CBG03573">
    <property type="protein sequence ID" value="CBP14769"/>
    <property type="gene ID" value="WBGene00026412"/>
    <property type="gene designation" value="Cbr-npp-18"/>
</dbReference>
<dbReference type="eggNOG" id="KOG2445">
    <property type="taxonomic scope" value="Eukaryota"/>
</dbReference>
<dbReference type="HOGENOM" id="CLU_032441_1_1_1"/>
<dbReference type="InParanoid" id="A8WVD2"/>
<dbReference type="OMA" id="NAPTRRW"/>
<dbReference type="Proteomes" id="UP000008549">
    <property type="component" value="Unassembled WGS sequence"/>
</dbReference>
<dbReference type="GO" id="GO:0005765">
    <property type="term" value="C:lysosomal membrane"/>
    <property type="evidence" value="ECO:0007669"/>
    <property type="project" value="UniProtKB-SubCell"/>
</dbReference>
<dbReference type="GO" id="GO:0031080">
    <property type="term" value="C:nuclear pore outer ring"/>
    <property type="evidence" value="ECO:0000318"/>
    <property type="project" value="GO_Central"/>
</dbReference>
<dbReference type="GO" id="GO:0035859">
    <property type="term" value="C:Seh1-associated complex"/>
    <property type="evidence" value="ECO:0000318"/>
    <property type="project" value="GO_Central"/>
</dbReference>
<dbReference type="GO" id="GO:0005198">
    <property type="term" value="F:structural molecule activity"/>
    <property type="evidence" value="ECO:0007669"/>
    <property type="project" value="InterPro"/>
</dbReference>
<dbReference type="GO" id="GO:0034198">
    <property type="term" value="P:cellular response to amino acid starvation"/>
    <property type="evidence" value="ECO:0000318"/>
    <property type="project" value="GO_Central"/>
</dbReference>
<dbReference type="GO" id="GO:0051028">
    <property type="term" value="P:mRNA transport"/>
    <property type="evidence" value="ECO:0007669"/>
    <property type="project" value="UniProtKB-KW"/>
</dbReference>
<dbReference type="GO" id="GO:1904263">
    <property type="term" value="P:positive regulation of TORC1 signaling"/>
    <property type="evidence" value="ECO:0000318"/>
    <property type="project" value="GO_Central"/>
</dbReference>
<dbReference type="GO" id="GO:0015031">
    <property type="term" value="P:protein transport"/>
    <property type="evidence" value="ECO:0007669"/>
    <property type="project" value="UniProtKB-KW"/>
</dbReference>
<dbReference type="FunFam" id="2.130.10.10:FF:001749">
    <property type="entry name" value="Nucleoporin SEH1"/>
    <property type="match status" value="1"/>
</dbReference>
<dbReference type="Gene3D" id="2.130.10.10">
    <property type="entry name" value="YVTN repeat-like/Quinoprotein amine dehydrogenase"/>
    <property type="match status" value="1"/>
</dbReference>
<dbReference type="InterPro" id="IPR037363">
    <property type="entry name" value="Sec13/Seh1_fam"/>
</dbReference>
<dbReference type="InterPro" id="IPR015943">
    <property type="entry name" value="WD40/YVTN_repeat-like_dom_sf"/>
</dbReference>
<dbReference type="InterPro" id="IPR036322">
    <property type="entry name" value="WD40_repeat_dom_sf"/>
</dbReference>
<dbReference type="InterPro" id="IPR001680">
    <property type="entry name" value="WD40_rpt"/>
</dbReference>
<dbReference type="PANTHER" id="PTHR11024">
    <property type="entry name" value="NUCLEAR PORE COMPLEX PROTEIN SEC13 / SEH1 FAMILY MEMBER"/>
    <property type="match status" value="1"/>
</dbReference>
<dbReference type="PANTHER" id="PTHR11024:SF3">
    <property type="entry name" value="NUCLEOPORIN SEH1"/>
    <property type="match status" value="1"/>
</dbReference>
<dbReference type="Pfam" id="PF00400">
    <property type="entry name" value="WD40"/>
    <property type="match status" value="2"/>
</dbReference>
<dbReference type="SMART" id="SM00320">
    <property type="entry name" value="WD40"/>
    <property type="match status" value="6"/>
</dbReference>
<dbReference type="SUPFAM" id="SSF50978">
    <property type="entry name" value="WD40 repeat-like"/>
    <property type="match status" value="1"/>
</dbReference>
<dbReference type="PROSITE" id="PS50082">
    <property type="entry name" value="WD_REPEATS_2"/>
    <property type="match status" value="1"/>
</dbReference>
<dbReference type="PROSITE" id="PS50294">
    <property type="entry name" value="WD_REPEATS_REGION"/>
    <property type="match status" value="1"/>
</dbReference>
<sequence>MSADKSPYQIEPYKTVGAHRDLIHCVSFDPHGRRMATCASDMTMAIWDRQPDGNWRRSAHWKCHGGAVWRVIWAHPEFGQIVASCSYDRTIVIWEEQIVRTEKDLKCKESQWIRRTIISDNRSDVTDICFSPRHLGLSLASCNVLGAVRIYEAPDVVDASRWNLIHELQAFHTRCGCVTWSLSRMHRPLIAVGSDEKKAGGKERVVIYENIDGLRKWQRIHSLVFDMPCPITDLKFSPISMVDSHQLAIASGDVHVFNIKVPRTAILEEDGVDNPIHLADYSFQRVALLGDQRKAWRIRYNLIGSVITSTSLDGTLRSWKSLFVNQWVKLSEMNVDDYVPTADEVHKIVEAKTTERLPSQLDKVYF</sequence>
<protein>
    <recommendedName>
        <fullName evidence="1">Nucleoporin SEH1</fullName>
    </recommendedName>
    <alternativeName>
        <fullName evidence="5">GATOR complex protein SEH1</fullName>
    </alternativeName>
    <alternativeName>
        <fullName evidence="1 6">Nuclear pore complex protein 18</fullName>
    </alternativeName>
    <alternativeName>
        <fullName evidence="1">SEC13-like protein</fullName>
    </alternativeName>
</protein>
<keyword id="KW-0458">Lysosome</keyword>
<keyword id="KW-0472">Membrane</keyword>
<keyword id="KW-0509">mRNA transport</keyword>
<keyword id="KW-0906">Nuclear pore complex</keyword>
<keyword id="KW-0539">Nucleus</keyword>
<keyword id="KW-0653">Protein transport</keyword>
<keyword id="KW-1185">Reference proteome</keyword>
<keyword id="KW-0677">Repeat</keyword>
<keyword id="KW-0811">Translocation</keyword>
<keyword id="KW-0813">Transport</keyword>
<keyword id="KW-0853">WD repeat</keyword>
<feature type="chain" id="PRO_0000405804" description="Nucleoporin SEH1">
    <location>
        <begin position="1"/>
        <end position="366"/>
    </location>
</feature>
<feature type="repeat" description="WD 1" evidence="4">
    <location>
        <begin position="18"/>
        <end position="57"/>
    </location>
</feature>
<feature type="repeat" description="WD 2" evidence="4">
    <location>
        <begin position="63"/>
        <end position="104"/>
    </location>
</feature>
<feature type="repeat" description="WD 3" evidence="4">
    <location>
        <begin position="111"/>
        <end position="152"/>
    </location>
</feature>
<feature type="repeat" description="WD 4" evidence="4">
    <location>
        <begin position="161"/>
        <end position="209"/>
    </location>
</feature>
<feature type="repeat" description="WD 5" evidence="4">
    <location>
        <begin position="226"/>
        <end position="267"/>
    </location>
</feature>
<feature type="repeat" description="WD 6" evidence="4">
    <location>
        <begin position="290"/>
        <end position="329"/>
    </location>
</feature>
<reference evidence="6" key="1">
    <citation type="journal article" date="2003" name="PLoS Biol.">
        <title>The genome sequence of Caenorhabditis briggsae: a platform for comparative genomics.</title>
        <authorList>
            <person name="Stein L.D."/>
            <person name="Bao Z."/>
            <person name="Blasiar D."/>
            <person name="Blumenthal T."/>
            <person name="Brent M.R."/>
            <person name="Chen N."/>
            <person name="Chinwalla A."/>
            <person name="Clarke L."/>
            <person name="Clee C."/>
            <person name="Coghlan A."/>
            <person name="Coulson A."/>
            <person name="D'Eustachio P."/>
            <person name="Fitch D.H.A."/>
            <person name="Fulton L.A."/>
            <person name="Fulton R.E."/>
            <person name="Griffiths-Jones S."/>
            <person name="Harris T.W."/>
            <person name="Hillier L.W."/>
            <person name="Kamath R."/>
            <person name="Kuwabara P.E."/>
            <person name="Mardis E.R."/>
            <person name="Marra M.A."/>
            <person name="Miner T.L."/>
            <person name="Minx P."/>
            <person name="Mullikin J.C."/>
            <person name="Plumb R.W."/>
            <person name="Rogers J."/>
            <person name="Schein J.E."/>
            <person name="Sohrmann M."/>
            <person name="Spieth J."/>
            <person name="Stajich J.E."/>
            <person name="Wei C."/>
            <person name="Willey D."/>
            <person name="Wilson R.K."/>
            <person name="Durbin R.M."/>
            <person name="Waterston R.H."/>
        </authorList>
    </citation>
    <scope>NUCLEOTIDE SEQUENCE [LARGE SCALE GENOMIC DNA]</scope>
    <source>
        <strain evidence="6">AF16</strain>
    </source>
</reference>
<organism>
    <name type="scientific">Caenorhabditis briggsae</name>
    <dbReference type="NCBI Taxonomy" id="6238"/>
    <lineage>
        <taxon>Eukaryota</taxon>
        <taxon>Metazoa</taxon>
        <taxon>Ecdysozoa</taxon>
        <taxon>Nematoda</taxon>
        <taxon>Chromadorea</taxon>
        <taxon>Rhabditida</taxon>
        <taxon>Rhabditina</taxon>
        <taxon>Rhabditomorpha</taxon>
        <taxon>Rhabditoidea</taxon>
        <taxon>Rhabditidae</taxon>
        <taxon>Peloderinae</taxon>
        <taxon>Caenorhabditis</taxon>
    </lineage>
</organism>
<accession>A8WVD2</accession>
<gene>
    <name evidence="7" type="primary">npp-18</name>
    <name type="ORF">CBG03573</name>
</gene>
<evidence type="ECO:0000250" key="1">
    <source>
        <dbReference type="UniProtKB" id="O45933"/>
    </source>
</evidence>
<evidence type="ECO:0000250" key="2">
    <source>
        <dbReference type="UniProtKB" id="P55735"/>
    </source>
</evidence>
<evidence type="ECO:0000250" key="3">
    <source>
        <dbReference type="UniProtKB" id="Q96EE3"/>
    </source>
</evidence>
<evidence type="ECO:0000255" key="4"/>
<evidence type="ECO:0000305" key="5"/>
<evidence type="ECO:0000312" key="6">
    <source>
        <dbReference type="EMBL" id="CAP24443.1"/>
    </source>
</evidence>
<evidence type="ECO:0000312" key="7">
    <source>
        <dbReference type="WormBase" id="CBG03573"/>
    </source>
</evidence>
<comment type="function">
    <text evidence="1">Probable component of the nuclear pore complex (NPC) which is involved in the trafficking of macromolecules between the cytoplasm and nucleus.</text>
</comment>
<comment type="function">
    <text evidence="2">As a component of the GATOR complex may function in the amino acid-sensing branch of the TORC1 signaling pathway.</text>
</comment>
<comment type="subunit">
    <text evidence="3">Component of the nuclear pore complex (NPC). Probably part of the GATOR complex.</text>
</comment>
<comment type="subcellular location">
    <subcellularLocation>
        <location evidence="3">Nucleus</location>
        <location evidence="3">Nuclear pore complex</location>
    </subcellularLocation>
    <subcellularLocation>
        <location evidence="3">Lysosome membrane</location>
    </subcellularLocation>
</comment>
<comment type="similarity">
    <text evidence="4">Belongs to the WD repeat SEC13 family.</text>
</comment>
<name>SEH1_CAEBR</name>
<proteinExistence type="inferred from homology"/>